<protein>
    <recommendedName>
        <fullName evidence="1">Small ribosomal subunit protein bS6</fullName>
    </recommendedName>
    <alternativeName>
        <fullName evidence="3">30S ribosomal protein S6</fullName>
    </alternativeName>
</protein>
<comment type="function">
    <text evidence="1">Binds together with bS18 to 16S ribosomal RNA.</text>
</comment>
<comment type="similarity">
    <text evidence="1">Belongs to the bacterial ribosomal protein bS6 family.</text>
</comment>
<accession>B9KJP0</accession>
<name>RS6_CERSK</name>
<sequence length="135" mass="15520">MSLYEHVFIARQDLSNAQAEGLIEHFSTVLADNGGKVVDREYWGVKTMAYKINKNRKGHYAFLKSDAPSAAVQEMERLMRLHDDVMRVLTIKVDKHAEGPSIQMQKRDERERGDRGDRSDRGDRGDRGDRGGFRR</sequence>
<dbReference type="EMBL" id="CP001150">
    <property type="protein sequence ID" value="ACM01337.1"/>
    <property type="molecule type" value="Genomic_DNA"/>
</dbReference>
<dbReference type="RefSeq" id="WP_002720282.1">
    <property type="nucleotide sequence ID" value="NC_011963.1"/>
</dbReference>
<dbReference type="SMR" id="B9KJP0"/>
<dbReference type="GeneID" id="67446887"/>
<dbReference type="KEGG" id="rsk:RSKD131_1477"/>
<dbReference type="HOGENOM" id="CLU_113441_2_0_5"/>
<dbReference type="GO" id="GO:0022627">
    <property type="term" value="C:cytosolic small ribosomal subunit"/>
    <property type="evidence" value="ECO:0007669"/>
    <property type="project" value="TreeGrafter"/>
</dbReference>
<dbReference type="GO" id="GO:0070181">
    <property type="term" value="F:small ribosomal subunit rRNA binding"/>
    <property type="evidence" value="ECO:0007669"/>
    <property type="project" value="TreeGrafter"/>
</dbReference>
<dbReference type="GO" id="GO:0003735">
    <property type="term" value="F:structural constituent of ribosome"/>
    <property type="evidence" value="ECO:0007669"/>
    <property type="project" value="InterPro"/>
</dbReference>
<dbReference type="GO" id="GO:0006412">
    <property type="term" value="P:translation"/>
    <property type="evidence" value="ECO:0007669"/>
    <property type="project" value="UniProtKB-UniRule"/>
</dbReference>
<dbReference type="CDD" id="cd00473">
    <property type="entry name" value="bS6"/>
    <property type="match status" value="1"/>
</dbReference>
<dbReference type="Gene3D" id="3.30.70.60">
    <property type="match status" value="1"/>
</dbReference>
<dbReference type="HAMAP" id="MF_00360">
    <property type="entry name" value="Ribosomal_bS6"/>
    <property type="match status" value="1"/>
</dbReference>
<dbReference type="InterPro" id="IPR000529">
    <property type="entry name" value="Ribosomal_bS6"/>
</dbReference>
<dbReference type="InterPro" id="IPR035980">
    <property type="entry name" value="Ribosomal_bS6_sf"/>
</dbReference>
<dbReference type="InterPro" id="IPR020814">
    <property type="entry name" value="Ribosomal_S6_plastid/chlpt"/>
</dbReference>
<dbReference type="InterPro" id="IPR014717">
    <property type="entry name" value="Transl_elong_EF1B/ribsomal_bS6"/>
</dbReference>
<dbReference type="NCBIfam" id="TIGR00166">
    <property type="entry name" value="S6"/>
    <property type="match status" value="1"/>
</dbReference>
<dbReference type="PANTHER" id="PTHR21011">
    <property type="entry name" value="MITOCHONDRIAL 28S RIBOSOMAL PROTEIN S6"/>
    <property type="match status" value="1"/>
</dbReference>
<dbReference type="PANTHER" id="PTHR21011:SF1">
    <property type="entry name" value="SMALL RIBOSOMAL SUBUNIT PROTEIN BS6M"/>
    <property type="match status" value="1"/>
</dbReference>
<dbReference type="Pfam" id="PF01250">
    <property type="entry name" value="Ribosomal_S6"/>
    <property type="match status" value="1"/>
</dbReference>
<dbReference type="SUPFAM" id="SSF54995">
    <property type="entry name" value="Ribosomal protein S6"/>
    <property type="match status" value="1"/>
</dbReference>
<feature type="chain" id="PRO_1000133541" description="Small ribosomal subunit protein bS6">
    <location>
        <begin position="1"/>
        <end position="135"/>
    </location>
</feature>
<feature type="region of interest" description="Disordered" evidence="2">
    <location>
        <begin position="96"/>
        <end position="135"/>
    </location>
</feature>
<feature type="compositionally biased region" description="Basic and acidic residues" evidence="2">
    <location>
        <begin position="105"/>
        <end position="135"/>
    </location>
</feature>
<evidence type="ECO:0000255" key="1">
    <source>
        <dbReference type="HAMAP-Rule" id="MF_00360"/>
    </source>
</evidence>
<evidence type="ECO:0000256" key="2">
    <source>
        <dbReference type="SAM" id="MobiDB-lite"/>
    </source>
</evidence>
<evidence type="ECO:0000305" key="3"/>
<gene>
    <name evidence="1" type="primary">rpsF</name>
    <name type="ordered locus">RSKD131_1477</name>
</gene>
<keyword id="KW-0687">Ribonucleoprotein</keyword>
<keyword id="KW-0689">Ribosomal protein</keyword>
<keyword id="KW-0694">RNA-binding</keyword>
<keyword id="KW-0699">rRNA-binding</keyword>
<organism>
    <name type="scientific">Cereibacter sphaeroides (strain KD131 / KCTC 12085)</name>
    <name type="common">Rhodobacter sphaeroides</name>
    <dbReference type="NCBI Taxonomy" id="557760"/>
    <lineage>
        <taxon>Bacteria</taxon>
        <taxon>Pseudomonadati</taxon>
        <taxon>Pseudomonadota</taxon>
        <taxon>Alphaproteobacteria</taxon>
        <taxon>Rhodobacterales</taxon>
        <taxon>Paracoccaceae</taxon>
        <taxon>Cereibacter</taxon>
    </lineage>
</organism>
<reference key="1">
    <citation type="journal article" date="2009" name="J. Bacteriol.">
        <title>Complete genome sequence of Rhodobacter sphaeroides KD131.</title>
        <authorList>
            <person name="Lim S.-K."/>
            <person name="Kim S.J."/>
            <person name="Cha S.H."/>
            <person name="Oh Y.-K."/>
            <person name="Rhee H.-J."/>
            <person name="Kim M.-S."/>
            <person name="Lee J.K."/>
        </authorList>
    </citation>
    <scope>NUCLEOTIDE SEQUENCE [LARGE SCALE GENOMIC DNA]</scope>
    <source>
        <strain>KD131 / KCTC 12085</strain>
    </source>
</reference>
<proteinExistence type="inferred from homology"/>